<comment type="function">
    <text evidence="2 3 7 11 12 13 14 15 16 20 22 29">Catalyzes the conversion of biologically active 11beta-hydroxyglucocorticoids (11beta-hydroxysteroid) such as cortisol, to inactive 11-ketoglucocorticoids (11-oxosteroid) such as cortisone, in the presence of NAD(+) (PubMed:10497248, PubMed:12788846, PubMed:17314322, PubMed:22796344, PubMed:27927697, PubMed:30902677, PubMed:33387577, PubMed:7859916, PubMed:8538347). Functions as a dehydrogenase (oxidase), thereby decreasing the concentration of active glucocorticoids, thus protecting the nonselective mineralocorticoid receptor from occupation by glucocorticoids (PubMed:10497248, PubMed:12788846, PubMed:17314322, PubMed:33387577, PubMed:7859916). Plays an important role in maintaining glucocorticoids balance during preimplantation and protects the fetus from excessive maternal corticosterone exposure (By similarity). Catalyzes the oxidation of 11beta-hydroxytestosterone (11beta,17beta-dihydroxyandrost-4-ene-3-one) to 11-ketotestosterone (17beta-hydroxyandrost-4-ene-3,11-dione), a major bioactive androgen (PubMed:22796344, PubMed:27927697). Catalyzes the conversion of 11beta-hydroxyandrostenedione (11beta-hydroxyandrost-4-ene-3,17-dione) to 11-ketoandrostenedione (androst-4-ene-3,11,17-trione), which can be further metabolized to 11-ketotestosterone (PubMed:27927697). Converts 7-beta-25-dihydroxycholesterol to 7-oxo-25-hydroxycholesterol in vitro (PubMed:30902677). 7-beta-25-dihydroxycholesterol (not 7-oxo-25-hydroxycholesterol) acts as a ligand for the G-protein-coupled receptor (GPCR) Epstein-Barr virus-induced gene 2 (EBI2) and may thereby regulate immune cell migration (PubMed:30902677). May protect ovulating oocytes and fertilizing spermatozoa from the adverse effects of cortisol (By similarity).</text>
</comment>
<comment type="catalytic activity">
    <reaction evidence="7 11 12 13 14 15 16 20 36">
        <text>an 11beta-hydroxysteroid + NAD(+) = an 11-oxosteroid + NADH + H(+)</text>
        <dbReference type="Rhea" id="RHEA:53116"/>
        <dbReference type="ChEBI" id="CHEBI:15378"/>
        <dbReference type="ChEBI" id="CHEBI:35346"/>
        <dbReference type="ChEBI" id="CHEBI:47787"/>
        <dbReference type="ChEBI" id="CHEBI:57540"/>
        <dbReference type="ChEBI" id="CHEBI:57945"/>
    </reaction>
    <physiologicalReaction direction="left-to-right" evidence="11 12 15 16 20 33 34 35 36">
        <dbReference type="Rhea" id="RHEA:53117"/>
    </physiologicalReaction>
</comment>
<comment type="catalytic activity">
    <reaction evidence="11 12 13 14 15 16 20 36">
        <text>cortisol + NAD(+) = cortisone + NADH + H(+)</text>
        <dbReference type="Rhea" id="RHEA:50208"/>
        <dbReference type="ChEBI" id="CHEBI:15378"/>
        <dbReference type="ChEBI" id="CHEBI:16962"/>
        <dbReference type="ChEBI" id="CHEBI:17650"/>
        <dbReference type="ChEBI" id="CHEBI:57540"/>
        <dbReference type="ChEBI" id="CHEBI:57945"/>
    </reaction>
    <physiologicalReaction direction="left-to-right" evidence="11 12 15 16 20 34 35 36">
        <dbReference type="Rhea" id="RHEA:50209"/>
    </physiologicalReaction>
</comment>
<comment type="catalytic activity">
    <reaction evidence="7 12 13 20">
        <text>corticosterone + NAD(+) = 11-dehydrocorticosterone + NADH + H(+)</text>
        <dbReference type="Rhea" id="RHEA:42204"/>
        <dbReference type="ChEBI" id="CHEBI:15378"/>
        <dbReference type="ChEBI" id="CHEBI:16827"/>
        <dbReference type="ChEBI" id="CHEBI:57540"/>
        <dbReference type="ChEBI" id="CHEBI:57945"/>
        <dbReference type="ChEBI" id="CHEBI:78600"/>
    </reaction>
    <physiologicalReaction direction="left-to-right" evidence="12 20 33 34">
        <dbReference type="Rhea" id="RHEA:42205"/>
    </physiologicalReaction>
</comment>
<comment type="catalytic activity">
    <reaction evidence="13 14">
        <text>11beta,17beta-dihydroxyandrost-4-ene-3-one + NAD(+) = 17beta-hydroxyandrost-4-ene-3,11-dione + NADH + H(+)</text>
        <dbReference type="Rhea" id="RHEA:69368"/>
        <dbReference type="ChEBI" id="CHEBI:15378"/>
        <dbReference type="ChEBI" id="CHEBI:34133"/>
        <dbReference type="ChEBI" id="CHEBI:57540"/>
        <dbReference type="ChEBI" id="CHEBI:57945"/>
        <dbReference type="ChEBI" id="CHEBI:81481"/>
    </reaction>
    <physiologicalReaction direction="left-to-right" evidence="34 35">
        <dbReference type="Rhea" id="RHEA:69369"/>
    </physiologicalReaction>
</comment>
<comment type="catalytic activity">
    <reaction evidence="14">
        <text>11beta-hydroxyandrost-4-ene-3,17-dione + NAD(+) = androst-4-ene-3,11,17-trione + NADH + H(+)</text>
        <dbReference type="Rhea" id="RHEA:69408"/>
        <dbReference type="ChEBI" id="CHEBI:2495"/>
        <dbReference type="ChEBI" id="CHEBI:15378"/>
        <dbReference type="ChEBI" id="CHEBI:27967"/>
        <dbReference type="ChEBI" id="CHEBI:57540"/>
        <dbReference type="ChEBI" id="CHEBI:57945"/>
    </reaction>
    <physiologicalReaction direction="left-to-right" evidence="35">
        <dbReference type="Rhea" id="RHEA:69409"/>
    </physiologicalReaction>
</comment>
<comment type="activity regulation">
    <text evidence="20">Inhibited by glycyrrhetinic acid (derived from liquorice).</text>
</comment>
<comment type="biophysicochemical properties">
    <kinetics>
        <KM evidence="20">47 nM for cortisol</KM>
        <KM evidence="13">84 nM for cortisol</KM>
        <KM evidence="11">26.1 nM for cortisol</KM>
        <KM evidence="12">785 nM for cortisol</KM>
        <KM evidence="20">5.1 nM for corticosterone</KM>
        <KM evidence="7">5.5 nM for corticosterone</KM>
        <KM evidence="13">5.7 nM for corticosterone</KM>
        <KM evidence="12">77 nM for corticosterone</KM>
        <KM evidence="13">37 nM for 11beta,17beta-dihydroxyandrost-4-ene-3-one</KM>
        <Vmax evidence="7">1.5 nmol/h/mg enzyme toward corticosterone</Vmax>
        <Vmax evidence="12">64.1 nmol/h/mg enzyme toward corticosterone</Vmax>
        <Vmax evidence="12">66.0 nmol/h/mg enzyme toward cortisol</Vmax>
    </kinetics>
</comment>
<comment type="pathway">
    <text evidence="32">Steroid metabolism.</text>
</comment>
<comment type="subunit">
    <text evidence="10">Interacts with ligand-free cytoplasmic NR3C2.</text>
</comment>
<comment type="subcellular location">
    <subcellularLocation>
        <location evidence="12">Microsome</location>
    </subcellularLocation>
    <subcellularLocation>
        <location evidence="7 12">Endoplasmic reticulum</location>
    </subcellularLocation>
</comment>
<comment type="tissue specificity">
    <text evidence="20 21">Expressed in kidney, placenta, pancreas, prostate, ovary, small intestine and colon, and in lower levels in the spleen and testis (PubMed:7859916). At midgestation, expressed at high levels in placenta and in fetal kidney and, at much lower levels, in fetal lung and testis (PubMed:8530071).</text>
</comment>
<comment type="disease" evidence="6 8 9 11 12 17 18 19 22 23 24 25 27">
    <disease id="DI-01187">
        <name>Apparent mineralocorticoid excess</name>
        <acronym>AME</acronym>
        <description>An autosomal recessive form of low-renin hypertension. It is usually diagnosed within the first years of life and is characterized by polyuria and polydipsia, failure to thrive, hypernatremia, severe hypertension with low renin and aldosterone levels, profound hypokalemia with metabolic alkalosis, and most often nephrocalcinosis.</description>
        <dbReference type="MIM" id="218030"/>
    </disease>
    <text>The disease is caused by variants affecting the gene represented in this entry.</text>
</comment>
<comment type="miscellaneous">
    <text>Consumption of large amounts of liquorice can lead to apparent mineralocorticoid excess and hypertension.</text>
</comment>
<comment type="similarity">
    <text evidence="32">Belongs to the short-chain dehydrogenases/reductases (SDR) family.</text>
</comment>
<dbReference type="EC" id="1.1.1.-" evidence="7 11 15 16 20 36"/>
<dbReference type="EMBL" id="U14631">
    <property type="protein sequence ID" value="AAA91969.1"/>
    <property type="molecule type" value="mRNA"/>
</dbReference>
<dbReference type="EMBL" id="U27317">
    <property type="protein sequence ID" value="AAB48544.1"/>
    <property type="molecule type" value="Genomic_DNA"/>
</dbReference>
<dbReference type="EMBL" id="U26726">
    <property type="protein sequence ID" value="AAC50356.1"/>
    <property type="molecule type" value="mRNA"/>
</dbReference>
<dbReference type="EMBL" id="S80133">
    <property type="protein sequence ID" value="AAD14324.1"/>
    <property type="molecule type" value="Genomic_DNA"/>
</dbReference>
<dbReference type="EMBL" id="EF694683">
    <property type="protein sequence ID" value="ABS29267.1"/>
    <property type="molecule type" value="Genomic_DNA"/>
</dbReference>
<dbReference type="EMBL" id="FJ515828">
    <property type="protein sequence ID" value="ACS13714.1"/>
    <property type="molecule type" value="Genomic_DNA"/>
</dbReference>
<dbReference type="EMBL" id="CH471092">
    <property type="protein sequence ID" value="EAW83134.1"/>
    <property type="molecule type" value="Genomic_DNA"/>
</dbReference>
<dbReference type="EMBL" id="BC036780">
    <property type="protein sequence ID" value="AAH36780.1"/>
    <property type="molecule type" value="mRNA"/>
</dbReference>
<dbReference type="EMBL" id="BC064536">
    <property type="protein sequence ID" value="AAH64536.1"/>
    <property type="molecule type" value="mRNA"/>
</dbReference>
<dbReference type="EMBL" id="AY046280">
    <property type="protein sequence ID" value="AAK91586.1"/>
    <property type="molecule type" value="Genomic_DNA"/>
</dbReference>
<dbReference type="CCDS" id="CCDS10837.1"/>
<dbReference type="PIR" id="S62789">
    <property type="entry name" value="S62789"/>
</dbReference>
<dbReference type="RefSeq" id="NP_000187.3">
    <property type="nucleotide sequence ID" value="NM_000196.3"/>
</dbReference>
<dbReference type="SMR" id="P80365"/>
<dbReference type="BioGRID" id="109524">
    <property type="interactions" value="8"/>
</dbReference>
<dbReference type="FunCoup" id="P80365">
    <property type="interactions" value="295"/>
</dbReference>
<dbReference type="STRING" id="9606.ENSP00000316786"/>
<dbReference type="BindingDB" id="P80365"/>
<dbReference type="ChEMBL" id="CHEMBL3746"/>
<dbReference type="DrugBank" id="DB04652">
    <property type="generic name" value="Corticosterone"/>
</dbReference>
<dbReference type="DrugBank" id="DB01234">
    <property type="generic name" value="Dexamethasone"/>
</dbReference>
<dbReference type="DrugBank" id="DB14649">
    <property type="generic name" value="Dexamethasone acetate"/>
</dbReference>
<dbReference type="DrugBank" id="DB00687">
    <property type="generic name" value="Fludrocortisone"/>
</dbReference>
<dbReference type="DrugBank" id="DB01185">
    <property type="generic name" value="Fluoxymesterone"/>
</dbReference>
<dbReference type="DrugBank" id="DB01569">
    <property type="generic name" value="Formebolone"/>
</dbReference>
<dbReference type="DrugBank" id="DB00741">
    <property type="generic name" value="Hydrocortisone"/>
</dbReference>
<dbReference type="DrugBank" id="DB14538">
    <property type="generic name" value="Hydrocortisone aceponate"/>
</dbReference>
<dbReference type="DrugBank" id="DB14539">
    <property type="generic name" value="Hydrocortisone acetate"/>
</dbReference>
<dbReference type="DrugBank" id="DB14540">
    <property type="generic name" value="Hydrocortisone butyrate"/>
</dbReference>
<dbReference type="DrugBank" id="DB14541">
    <property type="generic name" value="Hydrocortisone cypionate"/>
</dbReference>
<dbReference type="DrugBank" id="DB14542">
    <property type="generic name" value="Hydrocortisone phosphate"/>
</dbReference>
<dbReference type="DrugBank" id="DB14543">
    <property type="generic name" value="Hydrocortisone probutate"/>
</dbReference>
<dbReference type="DrugBank" id="DB14544">
    <property type="generic name" value="Hydrocortisone valerate"/>
</dbReference>
<dbReference type="DrugBank" id="DB00959">
    <property type="generic name" value="Methylprednisolone"/>
</dbReference>
<dbReference type="DrugBank" id="DB00157">
    <property type="generic name" value="NADH"/>
</dbReference>
<dbReference type="DrugBank" id="DB14631">
    <property type="generic name" value="Prednisolone phosphate"/>
</dbReference>
<dbReference type="DrugCentral" id="P80365"/>
<dbReference type="GuidetoPHARMACOLOGY" id="3143"/>
<dbReference type="SwissLipids" id="SLP:000000810"/>
<dbReference type="GlyGen" id="P80365">
    <property type="glycosylation" value="1 site"/>
</dbReference>
<dbReference type="iPTMnet" id="P80365"/>
<dbReference type="PhosphoSitePlus" id="P80365"/>
<dbReference type="SwissPalm" id="P80365"/>
<dbReference type="BioMuta" id="HSD11B2"/>
<dbReference type="DMDM" id="30316367"/>
<dbReference type="jPOST" id="P80365"/>
<dbReference type="MassIVE" id="P80365"/>
<dbReference type="PaxDb" id="9606-ENSP00000316786"/>
<dbReference type="PeptideAtlas" id="P80365"/>
<dbReference type="ProteomicsDB" id="57680"/>
<dbReference type="Antibodypedia" id="29548">
    <property type="antibodies" value="309 antibodies from 32 providers"/>
</dbReference>
<dbReference type="DNASU" id="3291"/>
<dbReference type="Ensembl" id="ENST00000326152.6">
    <property type="protein sequence ID" value="ENSP00000316786.5"/>
    <property type="gene ID" value="ENSG00000176387.7"/>
</dbReference>
<dbReference type="GeneID" id="3291"/>
<dbReference type="KEGG" id="hsa:3291"/>
<dbReference type="MANE-Select" id="ENST00000326152.6">
    <property type="protein sequence ID" value="ENSP00000316786.5"/>
    <property type="RefSeq nucleotide sequence ID" value="NM_000196.4"/>
    <property type="RefSeq protein sequence ID" value="NP_000187.3"/>
</dbReference>
<dbReference type="UCSC" id="uc002etd.4">
    <property type="organism name" value="human"/>
</dbReference>
<dbReference type="AGR" id="HGNC:5209"/>
<dbReference type="CTD" id="3291"/>
<dbReference type="DisGeNET" id="3291"/>
<dbReference type="GeneCards" id="HSD11B2"/>
<dbReference type="HGNC" id="HGNC:5209">
    <property type="gene designation" value="HSD11B2"/>
</dbReference>
<dbReference type="HPA" id="ENSG00000176387">
    <property type="expression patterns" value="Group enriched (intestine, kidney, salivary gland)"/>
</dbReference>
<dbReference type="MalaCards" id="HSD11B2"/>
<dbReference type="MIM" id="218030">
    <property type="type" value="phenotype"/>
</dbReference>
<dbReference type="MIM" id="614232">
    <property type="type" value="gene"/>
</dbReference>
<dbReference type="neXtProt" id="NX_P80365"/>
<dbReference type="OpenTargets" id="ENSG00000176387"/>
<dbReference type="Orphanet" id="320">
    <property type="disease" value="Apparent mineralocorticoid excess"/>
</dbReference>
<dbReference type="PharmGKB" id="PA29477"/>
<dbReference type="VEuPathDB" id="HostDB:ENSG00000176387"/>
<dbReference type="eggNOG" id="KOG1610">
    <property type="taxonomic scope" value="Eukaryota"/>
</dbReference>
<dbReference type="GeneTree" id="ENSGT00940000159716"/>
<dbReference type="HOGENOM" id="CLU_010194_2_0_1"/>
<dbReference type="InParanoid" id="P80365"/>
<dbReference type="OMA" id="GMGLMYF"/>
<dbReference type="OrthoDB" id="9876299at2759"/>
<dbReference type="PAN-GO" id="P80365">
    <property type="GO annotations" value="3 GO annotations based on evolutionary models"/>
</dbReference>
<dbReference type="PhylomeDB" id="P80365"/>
<dbReference type="TreeFam" id="TF325617"/>
<dbReference type="BioCyc" id="MetaCyc:ENSG00000176387-MONOMER"/>
<dbReference type="BRENDA" id="1.1.1.146">
    <property type="organism ID" value="2681"/>
</dbReference>
<dbReference type="BRENDA" id="1.1.1.B40">
    <property type="organism ID" value="2681"/>
</dbReference>
<dbReference type="PathwayCommons" id="P80365"/>
<dbReference type="Reactome" id="R-HSA-194002">
    <property type="pathway name" value="Glucocorticoid biosynthesis"/>
</dbReference>
<dbReference type="Reactome" id="R-HSA-9757110">
    <property type="pathway name" value="Prednisone ADME"/>
</dbReference>
<dbReference type="SABIO-RK" id="P80365"/>
<dbReference type="SignaLink" id="P80365"/>
<dbReference type="SIGNOR" id="P80365"/>
<dbReference type="BioGRID-ORCS" id="3291">
    <property type="hits" value="19 hits in 1153 CRISPR screens"/>
</dbReference>
<dbReference type="ChiTaRS" id="HSD11B2">
    <property type="organism name" value="human"/>
</dbReference>
<dbReference type="GeneWiki" id="Corticosteroid_11-beta-dehydrogenase_isozyme_2"/>
<dbReference type="GenomeRNAi" id="3291"/>
<dbReference type="Pharos" id="P80365">
    <property type="development level" value="Tchem"/>
</dbReference>
<dbReference type="PRO" id="PR:P80365"/>
<dbReference type="Proteomes" id="UP000005640">
    <property type="component" value="Chromosome 16"/>
</dbReference>
<dbReference type="RNAct" id="P80365">
    <property type="molecule type" value="protein"/>
</dbReference>
<dbReference type="Bgee" id="ENSG00000176387">
    <property type="expression patterns" value="Expressed in mucosa of transverse colon and 104 other cell types or tissues"/>
</dbReference>
<dbReference type="ExpressionAtlas" id="P80365">
    <property type="expression patterns" value="baseline and differential"/>
</dbReference>
<dbReference type="GO" id="GO:0005789">
    <property type="term" value="C:endoplasmic reticulum membrane"/>
    <property type="evidence" value="ECO:0000304"/>
    <property type="project" value="Reactome"/>
</dbReference>
<dbReference type="GO" id="GO:0043231">
    <property type="term" value="C:intracellular membrane-bounded organelle"/>
    <property type="evidence" value="ECO:0000314"/>
    <property type="project" value="HPA"/>
</dbReference>
<dbReference type="GO" id="GO:0070523">
    <property type="term" value="F:11-beta-hydroxysteroid dehydrogenase (NAD+) activity"/>
    <property type="evidence" value="ECO:0000315"/>
    <property type="project" value="UniProtKB"/>
</dbReference>
<dbReference type="GO" id="GO:0051287">
    <property type="term" value="F:NAD binding"/>
    <property type="evidence" value="ECO:0007669"/>
    <property type="project" value="Ensembl"/>
</dbReference>
<dbReference type="GO" id="GO:0005496">
    <property type="term" value="F:steroid binding"/>
    <property type="evidence" value="ECO:0007669"/>
    <property type="project" value="Ensembl"/>
</dbReference>
<dbReference type="GO" id="GO:0034650">
    <property type="term" value="P:cortisol metabolic process"/>
    <property type="evidence" value="ECO:0000315"/>
    <property type="project" value="UniProtKB"/>
</dbReference>
<dbReference type="GO" id="GO:0007565">
    <property type="term" value="P:female pregnancy"/>
    <property type="evidence" value="ECO:0007669"/>
    <property type="project" value="Ensembl"/>
</dbReference>
<dbReference type="GO" id="GO:0008211">
    <property type="term" value="P:glucocorticoid metabolic process"/>
    <property type="evidence" value="ECO:0000318"/>
    <property type="project" value="GO_Central"/>
</dbReference>
<dbReference type="GO" id="GO:0002017">
    <property type="term" value="P:regulation of blood volume by renal aldosterone"/>
    <property type="evidence" value="ECO:0007669"/>
    <property type="project" value="Ensembl"/>
</dbReference>
<dbReference type="GO" id="GO:0032094">
    <property type="term" value="P:response to food"/>
    <property type="evidence" value="ECO:0007669"/>
    <property type="project" value="Ensembl"/>
</dbReference>
<dbReference type="GO" id="GO:0051384">
    <property type="term" value="P:response to glucocorticoid"/>
    <property type="evidence" value="ECO:0007669"/>
    <property type="project" value="Ensembl"/>
</dbReference>
<dbReference type="GO" id="GO:0001666">
    <property type="term" value="P:response to hypoxia"/>
    <property type="evidence" value="ECO:0007669"/>
    <property type="project" value="Ensembl"/>
</dbReference>
<dbReference type="GO" id="GO:0032868">
    <property type="term" value="P:response to insulin"/>
    <property type="evidence" value="ECO:0007669"/>
    <property type="project" value="Ensembl"/>
</dbReference>
<dbReference type="GO" id="GO:0009410">
    <property type="term" value="P:response to xenobiotic stimulus"/>
    <property type="evidence" value="ECO:0007669"/>
    <property type="project" value="Ensembl"/>
</dbReference>
<dbReference type="CDD" id="cd09805">
    <property type="entry name" value="type2_17beta_HSD-like_SDR_c"/>
    <property type="match status" value="1"/>
</dbReference>
<dbReference type="FunFam" id="3.40.50.720:FF:000074">
    <property type="entry name" value="Retinol dehydrogenase type 1"/>
    <property type="match status" value="1"/>
</dbReference>
<dbReference type="Gene3D" id="3.40.50.720">
    <property type="entry name" value="NAD(P)-binding Rossmann-like Domain"/>
    <property type="match status" value="1"/>
</dbReference>
<dbReference type="InterPro" id="IPR036291">
    <property type="entry name" value="NAD(P)-bd_dom_sf"/>
</dbReference>
<dbReference type="InterPro" id="IPR020904">
    <property type="entry name" value="Sc_DH/Rdtase_CS"/>
</dbReference>
<dbReference type="InterPro" id="IPR002347">
    <property type="entry name" value="SDR_fam"/>
</dbReference>
<dbReference type="PANTHER" id="PTHR43313:SF2">
    <property type="entry name" value="11-BETA-HYDROXYSTEROID DEHYDROGENASE TYPE 2"/>
    <property type="match status" value="1"/>
</dbReference>
<dbReference type="PANTHER" id="PTHR43313">
    <property type="entry name" value="SHORT-CHAIN DEHYDROGENASE/REDUCTASE FAMILY 9C"/>
    <property type="match status" value="1"/>
</dbReference>
<dbReference type="Pfam" id="PF00106">
    <property type="entry name" value="adh_short"/>
    <property type="match status" value="1"/>
</dbReference>
<dbReference type="PRINTS" id="PR00081">
    <property type="entry name" value="GDHRDH"/>
</dbReference>
<dbReference type="SUPFAM" id="SSF51735">
    <property type="entry name" value="NAD(P)-binding Rossmann-fold domains"/>
    <property type="match status" value="1"/>
</dbReference>
<dbReference type="PROSITE" id="PS00061">
    <property type="entry name" value="ADH_SHORT"/>
    <property type="match status" value="1"/>
</dbReference>
<organism>
    <name type="scientific">Homo sapiens</name>
    <name type="common">Human</name>
    <dbReference type="NCBI Taxonomy" id="9606"/>
    <lineage>
        <taxon>Eukaryota</taxon>
        <taxon>Metazoa</taxon>
        <taxon>Chordata</taxon>
        <taxon>Craniata</taxon>
        <taxon>Vertebrata</taxon>
        <taxon>Euteleostomi</taxon>
        <taxon>Mammalia</taxon>
        <taxon>Eutheria</taxon>
        <taxon>Euarchontoglires</taxon>
        <taxon>Primates</taxon>
        <taxon>Haplorrhini</taxon>
        <taxon>Catarrhini</taxon>
        <taxon>Hominidae</taxon>
        <taxon>Homo</taxon>
    </lineage>
</organism>
<accession>P80365</accession>
<accession>A7LB28</accession>
<accession>C5HTY7</accession>
<accession>Q13194</accession>
<accession>Q6P2G9</accession>
<accession>Q8N439</accession>
<accession>Q96QN8</accession>
<accession>Q99887</accession>
<accession>Q9UC50</accession>
<accession>Q9UC51</accession>
<accession>Q9UCW5</accession>
<accession>Q9UCW6</accession>
<accession>Q9UCW7</accession>
<accession>Q9UCW8</accession>
<name>DHI2_HUMAN</name>
<keyword id="KW-0903">Direct protein sequencing</keyword>
<keyword id="KW-0225">Disease variant</keyword>
<keyword id="KW-0256">Endoplasmic reticulum</keyword>
<keyword id="KW-0443">Lipid metabolism</keyword>
<keyword id="KW-0492">Microsome</keyword>
<keyword id="KW-0520">NAD</keyword>
<keyword id="KW-0560">Oxidoreductase</keyword>
<keyword id="KW-1267">Proteomics identification</keyword>
<keyword id="KW-1185">Reference proteome</keyword>
<keyword id="KW-0753">Steroid metabolism</keyword>
<gene>
    <name evidence="38" type="primary">HSD11B2</name>
    <name evidence="31" type="synonym">HSD11K</name>
    <name type="synonym">SDR9C3</name>
</gene>
<protein>
    <recommendedName>
        <fullName evidence="30">11-beta-hydroxysteroid dehydrogenase type 2</fullName>
        <shortName>11-DH2</shortName>
        <shortName evidence="28 29 30">11-beta-HSD2</shortName>
        <ecNumber evidence="7 11 15 16 20 36">1.1.1.-</ecNumber>
    </recommendedName>
    <alternativeName>
        <fullName>11-beta-hydroxysteroid dehydrogenase type II</fullName>
        <shortName>11-HSD type II</shortName>
        <shortName>11-beta-HSD type II</shortName>
    </alternativeName>
    <alternativeName>
        <fullName evidence="32">Corticosteroid 11-beta-dehydrogenase isozyme 2</fullName>
    </alternativeName>
    <alternativeName>
        <fullName>NAD-dependent 11-beta-hydroxysteroid dehydrogenase</fullName>
    </alternativeName>
    <alternativeName>
        <fullName>Short chain dehydrogenase/reductase family 9C member 3</fullName>
    </alternativeName>
</protein>
<feature type="chain" id="PRO_0000054627" description="11-beta-hydroxysteroid dehydrogenase type 2">
    <location>
        <begin position="1"/>
        <end position="405"/>
    </location>
</feature>
<feature type="region of interest" description="Essential for protein stability">
    <location>
        <begin position="335"/>
        <end position="339"/>
    </location>
</feature>
<feature type="region of interest" description="Disordered" evidence="5">
    <location>
        <begin position="377"/>
        <end position="405"/>
    </location>
</feature>
<feature type="compositionally biased region" description="Low complexity" evidence="5">
    <location>
        <begin position="377"/>
        <end position="387"/>
    </location>
</feature>
<feature type="compositionally biased region" description="Pro residues" evidence="5">
    <location>
        <begin position="396"/>
        <end position="405"/>
    </location>
</feature>
<feature type="active site" description="Proton acceptor" evidence="4">
    <location>
        <position position="232"/>
    </location>
</feature>
<feature type="binding site" evidence="1">
    <location>
        <begin position="82"/>
        <end position="111"/>
    </location>
    <ligand>
        <name>NAD(+)</name>
        <dbReference type="ChEBI" id="CHEBI:57540"/>
    </ligand>
</feature>
<feature type="binding site" evidence="1">
    <location>
        <position position="219"/>
    </location>
    <ligand>
        <name>substrate</name>
    </ligand>
</feature>
<feature type="sequence variant" id="VAR_015634" description="In AME; reduces enzyme activity by at least 95%." evidence="9">
    <location>
        <begin position="114"/>
        <end position="115"/>
    </location>
</feature>
<feature type="sequence variant" id="VAR_052317" description="In dbSNP:rs13306425.">
    <original>R</original>
    <variation>H</variation>
    <location>
        <position position="147"/>
    </location>
</feature>
<feature type="sequence variant" id="VAR_015635" description="In AME; abolishes enzyme activity." evidence="8">
    <original>L</original>
    <variation>R</variation>
    <location>
        <position position="179"/>
    </location>
</feature>
<feature type="sequence variant" id="VAR_015636" description="In AME; reduces enzyme activity; dbSNP:rs2040967602." evidence="8">
    <original>S</original>
    <variation>F</variation>
    <location>
        <position position="180"/>
    </location>
</feature>
<feature type="sequence variant" id="VAR_015637" description="In AME; dbSNP:rs768507002." evidence="17 24">
    <original>R</original>
    <variation>C</variation>
    <location>
        <position position="186"/>
    </location>
</feature>
<feature type="sequence variant" id="VAR_006958" description="In AME; reduces enzyme activity by at least 95%; dbSNP:rs121917780." evidence="17 19 24">
    <original>R</original>
    <variation>C</variation>
    <location>
        <position position="208"/>
    </location>
</feature>
<feature type="sequence variant" id="VAR_015638" description="In AME; abolishes enzyme activity; dbSNP:rs28934592." evidence="8 23">
    <original>R</original>
    <variation>H</variation>
    <location>
        <position position="208"/>
    </location>
</feature>
<feature type="sequence variant" id="VAR_006959" description="In AME; reduces enzyme activity by 90%; dbSNP:rs28934591." evidence="6 19 27">
    <original>R</original>
    <variation>C</variation>
    <location>
        <position position="213"/>
    </location>
</feature>
<feature type="sequence variant" id="VAR_066514" description="In AME; reduces enzyme activity to about 6% of wild type; dbSNP:rs121917833." evidence="11">
    <original>D</original>
    <variation>N</variation>
    <location>
        <position position="223"/>
    </location>
</feature>
<feature type="sequence variant" id="VAR_015639" description="In hypertension; decreases affinity for cortisol; dbSNP:rs121917782." evidence="26">
    <original>P</original>
    <variation>L</variation>
    <location>
        <position position="227"/>
    </location>
</feature>
<feature type="sequence variant" id="VAR_015640" description="In AME; reduces enzyme activity; dbSNP:rs1309642469." evidence="8">
    <original>A</original>
    <variation>V</variation>
    <location>
        <position position="237"/>
    </location>
</feature>
<feature type="sequence variant" id="VAR_015641" description="In AME; associated with R-250." evidence="24">
    <original>D</original>
    <variation>N</variation>
    <location>
        <position position="244"/>
    </location>
</feature>
<feature type="sequence variant" id="VAR_015643" description="In AME; abolishes enzyme activity." evidence="17 19 24">
    <original>LL</original>
    <variation>PS</variation>
    <location>
        <begin position="250"/>
        <end position="251"/>
    </location>
</feature>
<feature type="sequence variant" id="VAR_015642" description="In AME; associated with N-244." evidence="24">
    <original>L</original>
    <variation>R</variation>
    <location>
        <position position="250"/>
    </location>
</feature>
<feature type="sequence variant" id="VAR_015644" description="In AME; decreases enzyme activity by 33%; dbSNP:rs28934594." evidence="25">
    <original>R</original>
    <variation>C</variation>
    <location>
        <position position="279"/>
    </location>
</feature>
<feature type="sequence variant" id="VAR_015645" description="In AME; abolishes enzyme activity; dbSNP:rs1453036708." evidence="6 8">
    <original>A</original>
    <variation>V</variation>
    <location>
        <position position="328"/>
    </location>
</feature>
<feature type="sequence variant" id="VAR_015647" description="In AME; abolishes enzyme activity." evidence="17 19 23 24">
    <original>RY</original>
    <variation>H</variation>
    <location>
        <begin position="337"/>
        <end position="338"/>
    </location>
</feature>
<feature type="sequence variant" id="VAR_066515" description="In AME; decreased half-life from 21 to 4 hours compared to wild-type, probably due to degradation via the proteasomal pathway; dbSNP:rs121917781." evidence="12 18 24">
    <original>R</original>
    <variation>C</variation>
    <location>
        <position position="337"/>
    </location>
</feature>
<feature type="sequence variant" id="VAR_015646" description="In AME; abolishes enzyme activity; decreased half-life from 21 to 3 hours compared to wild-type, probably due to degradation via the proteasomal pathway; dbSNP:rs387907117." evidence="12">
    <original>Y</original>
    <variation>H</variation>
    <location>
        <position position="338"/>
    </location>
</feature>
<feature type="sequence variant" id="VAR_085553" description="In AME; decreases enzyme activity." evidence="22">
    <location>
        <begin position="374"/>
        <end position="405"/>
    </location>
</feature>
<feature type="mutagenesis site" description="Abolishes cofactor specificity." evidence="9">
    <original>E</original>
    <variation>K</variation>
    <variation>Q</variation>
    <location>
        <position position="115"/>
    </location>
</feature>
<feature type="mutagenesis site" description="Reduced enzyme activity." evidence="12">
    <original>R</original>
    <variation>A</variation>
    <variation>Q</variation>
    <location>
        <position position="335"/>
    </location>
</feature>
<feature type="mutagenesis site" description="No effect on enzyme activity." evidence="12">
    <original>R</original>
    <variation>K</variation>
    <location>
        <position position="335"/>
    </location>
</feature>
<feature type="mutagenesis site" description="Almost complete loss of enzyme activity." evidence="12">
    <original>R</original>
    <variation>A</variation>
    <variation>Q</variation>
    <location>
        <position position="336"/>
    </location>
</feature>
<feature type="mutagenesis site" description="Reduced enzyme activity." evidence="12">
    <original>R</original>
    <variation>K</variation>
    <location>
        <position position="336"/>
    </location>
</feature>
<feature type="mutagenesis site" description="Almost complete loss of enzyme activity." evidence="12">
    <original>R</original>
    <variation>A</variation>
    <variation>Q</variation>
    <location>
        <position position="337"/>
    </location>
</feature>
<feature type="mutagenesis site" description="Reduced enzyme activity." evidence="12">
    <original>R</original>
    <variation>K</variation>
    <location>
        <position position="337"/>
    </location>
</feature>
<feature type="mutagenesis site" description="Complete loss of enzyme activity." evidence="12">
    <original>Y</original>
    <variation>F</variation>
    <variation>A</variation>
    <location>
        <position position="338"/>
    </location>
</feature>
<feature type="mutagenesis site" description="Reduced enzyme activity." evidence="12">
    <original>Y</original>
    <variation>A</variation>
    <variation>F</variation>
    <variation>H</variation>
    <location>
        <position position="339"/>
    </location>
</feature>
<feature type="sequence conflict" description="In Ref. 2; AAB48544." evidence="32" ref="2">
    <original>V</original>
    <variation>F</variation>
    <location>
        <position position="148"/>
    </location>
</feature>
<feature type="sequence conflict" description="In Ref. 1; AAA91969." evidence="32" ref="1">
    <original>V</original>
    <variation>L</variation>
    <location>
        <position position="148"/>
    </location>
</feature>
<feature type="sequence conflict" description="In Ref. 7; AAH64536." evidence="32" ref="7">
    <original>I</original>
    <variation>T</variation>
    <location>
        <position position="350"/>
    </location>
</feature>
<feature type="sequence conflict" description="In Ref. 7; AAH36780." evidence="32" ref="7">
    <original>D</original>
    <variation>G</variation>
    <location>
        <position position="392"/>
    </location>
</feature>
<reference key="1">
    <citation type="journal article" date="1994" name="Mol. Cell. Endocrinol.">
        <title>Cloning and tissue distribution of the human 11 beta-hydroxysteroid dehydrogenase type 2 enzyme.</title>
        <authorList>
            <person name="Albiston A.L."/>
            <person name="Obeyesekere V.R."/>
            <person name="Smith R.E."/>
            <person name="Krozowski Z.S."/>
        </authorList>
    </citation>
    <scope>NUCLEOTIDE SEQUENCE [MRNA]</scope>
    <scope>CATALYTIC ACTIVITY</scope>
    <scope>FUNCTION</scope>
    <scope>BIOPHYSICOCHEMICAL PROPERTIES</scope>
    <scope>ACTIVITY REGULATION</scope>
    <scope>TISSUE SPECIFICITY</scope>
    <source>
        <tissue>Kidney</tissue>
    </source>
</reference>
<reference key="2">
    <citation type="journal article" date="1995" name="Genomics">
        <title>Gene structure and chromosomal localization of the human HSD11K gene encoding the kidney (type 2) isozyme of 11 beta-hydroxysteroid dehydrogenase.</title>
        <authorList>
            <person name="Agarwal A.K."/>
            <person name="Rogerson F.M."/>
            <person name="Mune T."/>
            <person name="White P.C."/>
        </authorList>
    </citation>
    <scope>NUCLEOTIDE SEQUENCE [GENOMIC DNA]</scope>
    <scope>TISSUE SPECIFICITY</scope>
    <source>
        <tissue>Kidney</tissue>
    </source>
</reference>
<reference key="3">
    <citation type="journal article" date="1996" name="Biochem. J.">
        <title>Cloning and production of antisera to human placental 11 beta-hydroxysteroid dehydrogenase type 2.</title>
        <authorList>
            <person name="Brown R.W."/>
            <person name="Chapman K.E."/>
            <person name="Kotelevtsev Y."/>
            <person name="Yau J.L."/>
            <person name="Lindsay R.S."/>
            <person name="Brett L."/>
            <person name="Leckie C."/>
            <person name="Murad P."/>
            <person name="Lyons V."/>
            <person name="Mullins J.J."/>
            <person name="Edwards C.R.W."/>
            <person name="Seckl J.R."/>
        </authorList>
    </citation>
    <scope>NUCLEOTIDE SEQUENCE [MRNA]</scope>
    <source>
        <tissue>Placenta</tissue>
    </source>
</reference>
<reference key="4">
    <citation type="submission" date="2007-06" db="EMBL/GenBank/DDBJ databases">
        <authorList>
            <consortium name="SeattleSNPs variation discovery resource"/>
        </authorList>
    </citation>
    <scope>NUCLEOTIDE SEQUENCE [GENOMIC DNA]</scope>
</reference>
<reference key="5">
    <citation type="submission" date="2008-12" db="EMBL/GenBank/DDBJ databases">
        <authorList>
            <consortium name="NHLBI resequencing and genotyping service (RS&amp;G)"/>
        </authorList>
    </citation>
    <scope>NUCLEOTIDE SEQUENCE [GENOMIC DNA]</scope>
</reference>
<reference key="6">
    <citation type="submission" date="2005-07" db="EMBL/GenBank/DDBJ databases">
        <authorList>
            <person name="Mural R.J."/>
            <person name="Istrail S."/>
            <person name="Sutton G.G."/>
            <person name="Florea L."/>
            <person name="Halpern A.L."/>
            <person name="Mobarry C.M."/>
            <person name="Lippert R."/>
            <person name="Walenz B."/>
            <person name="Shatkay H."/>
            <person name="Dew I."/>
            <person name="Miller J.R."/>
            <person name="Flanigan M.J."/>
            <person name="Edwards N.J."/>
            <person name="Bolanos R."/>
            <person name="Fasulo D."/>
            <person name="Halldorsson B.V."/>
            <person name="Hannenhalli S."/>
            <person name="Turner R."/>
            <person name="Yooseph S."/>
            <person name="Lu F."/>
            <person name="Nusskern D.R."/>
            <person name="Shue B.C."/>
            <person name="Zheng X.H."/>
            <person name="Zhong F."/>
            <person name="Delcher A.L."/>
            <person name="Huson D.H."/>
            <person name="Kravitz S.A."/>
            <person name="Mouchard L."/>
            <person name="Reinert K."/>
            <person name="Remington K.A."/>
            <person name="Clark A.G."/>
            <person name="Waterman M.S."/>
            <person name="Eichler E.E."/>
            <person name="Adams M.D."/>
            <person name="Hunkapiller M.W."/>
            <person name="Myers E.W."/>
            <person name="Venter J.C."/>
        </authorList>
    </citation>
    <scope>NUCLEOTIDE SEQUENCE [LARGE SCALE GENOMIC DNA]</scope>
</reference>
<reference key="7">
    <citation type="journal article" date="2004" name="Genome Res.">
        <title>The status, quality, and expansion of the NIH full-length cDNA project: the Mammalian Gene Collection (MGC).</title>
        <authorList>
            <consortium name="The MGC Project Team"/>
        </authorList>
    </citation>
    <scope>NUCLEOTIDE SEQUENCE [LARGE SCALE MRNA]</scope>
    <source>
        <tissue>Ovary</tissue>
    </source>
</reference>
<reference key="8">
    <citation type="journal article" date="1996" name="Biochem. J.">
        <title>Purification of 11 beta-hydroxysteroid dehydrogenase type 2 from human placenta utilizing a novel affinity labelling technique.</title>
        <authorList>
            <person name="Brown R.W."/>
            <person name="Chapman K.E."/>
            <person name="Murad P."/>
            <person name="Edwards C.R."/>
            <person name="Seckl J.R."/>
        </authorList>
    </citation>
    <scope>PROTEIN SEQUENCE OF 19-24; 77-84; 102-112; 134-154; 191-198; 214-227; 229-235; 256-266; 272-278 AND 375-401</scope>
    <source>
        <tissue>Placenta</tissue>
    </source>
</reference>
<reference key="9">
    <citation type="submission" date="2001-07" db="EMBL/GenBank/DDBJ databases">
        <title>Human hydroxysteroid dehydrogenase type 2 HSD11B2.</title>
        <authorList>
            <person name="Amin H.K."/>
            <person name="Hoeppner W."/>
        </authorList>
    </citation>
    <scope>NUCLEOTIDE SEQUENCE [GENOMIC DNA] OF 90-221</scope>
</reference>
<reference key="10">
    <citation type="journal article" date="1995" name="J. Clin. Endocrinol. Metab.">
        <title>Several homozygous mutations in the gene for 11 beta-hydroxysteroid dehydrogenase type 2 in patients with apparent mineralocorticoid excess.</title>
        <authorList>
            <person name="Wilson R.C."/>
            <person name="Harbison M.D."/>
            <person name="Krozowski Z.S."/>
            <person name="Funder J.W."/>
            <person name="Shackleton C.H.L."/>
            <person name="Hanauske-Abel H.M."/>
            <person name="Wei J.-Q."/>
            <person name="Hertecant J."/>
            <person name="Moran A."/>
            <person name="Neiberger R.E."/>
            <person name="Balfe J.W."/>
            <person name="Fattah A."/>
            <person name="Daneman D."/>
            <person name="Licholai T."/>
            <person name="New M.I."/>
        </authorList>
    </citation>
    <scope>NUCLEOTIDE SEQUENCE [GENOMIC DNA] OF 182-211; 235-264 AND 325-354</scope>
    <scope>VARIANTS AME CYS-186; CYS-208; 250-LEU-LEU-251 DELINS PRO-SER AND 337-ARG-TYR-338 DELINS HIS</scope>
</reference>
<reference evidence="37" key="11">
    <citation type="journal article" date="1996" name="Lancet">
        <title>Hypertension in the syndrome of apparent mineralocorticoid excess due to mutation of the 11 beta-hydroxysteroid dehydrogenase type 2 gene.</title>
        <authorList>
            <person name="Stewart P.M."/>
            <person name="Krozowski Z.S."/>
            <person name="Gupta A."/>
            <person name="Milford D.V."/>
            <person name="Howie A.J."/>
            <person name="Sheppard M.C."/>
            <person name="Whorwood C.B."/>
        </authorList>
    </citation>
    <scope>PARTIAL NUCLEOTIDE SEQUENCE [GENOMIC DNA]</scope>
    <scope>FUNCTION</scope>
    <scope>CATALYTIC ACTIVITY</scope>
    <scope>VARIANT AME 374-ARG--ARG-405 DEL</scope>
</reference>
<reference key="12">
    <citation type="journal article" date="1987" name="Lancet">
        <title>Mineralocorticoid activity of liquorice: 11-beta-hydroxysteroid dehydrogenase deficiency comes of age.</title>
        <authorList>
            <person name="Stewart P.M."/>
            <person name="Wallace A.M."/>
            <person name="Valentino R."/>
            <person name="Burt D."/>
            <person name="Shackleton C.H.L."/>
            <person name="Edwards C.R.W."/>
        </authorList>
    </citation>
    <scope>CHARACTERIZATION</scope>
</reference>
<reference key="13">
    <citation type="journal article" date="1999" name="J. Biol. Chem.">
        <title>The N-terminal anchor sequences of 11beta-hydroxysteroid dehydrogenases determine their orientation in the endoplasmic reticulum membrane.</title>
        <authorList>
            <person name="Odermatt A."/>
            <person name="Arnold P."/>
            <person name="Stauffer A."/>
            <person name="Frey B.M."/>
            <person name="Frey F.J."/>
        </authorList>
    </citation>
    <scope>FUNCTION</scope>
    <scope>CATALYTIC ACTIVITY</scope>
    <scope>BIOPHYSICOCHEMICAL PROPERTIES</scope>
    <scope>SUBCELLULAR LOCATION</scope>
</reference>
<reference key="14">
    <citation type="journal article" date="2001" name="J. Biol. Chem.">
        <title>The intracellular localization of the mineralocorticoid receptor is regulated by 11beta-hydroxysteroid dehydrogenase type 2.</title>
        <authorList>
            <person name="Odermatt A."/>
            <person name="Arnold P."/>
            <person name="Frey F.J."/>
        </authorList>
    </citation>
    <scope>INTERACTION WITH NR3C2</scope>
</reference>
<reference key="15">
    <citation type="journal article" date="2012" name="Toxicology">
        <title>Species-specific differences in the inhibition of human and zebrafish 11beta-hydroxysteroid dehydrogenase 2 by thiram and organotins.</title>
        <authorList>
            <person name="Meyer A."/>
            <person name="Strajhar P."/>
            <person name="Murer C."/>
            <person name="Da Cunha T."/>
            <person name="Odermatt A."/>
        </authorList>
    </citation>
    <scope>FUNCTION</scope>
    <scope>CATALYTIC ACTIVITY</scope>
    <scope>BIOPHYSICOCHEMICAL PROPERTIES</scope>
</reference>
<reference key="16">
    <citation type="journal article" date="2017" name="J. Endocrinol.">
        <title>Absence of 11-keto reduction of cortisone and 11-ketotestosterone in the model organism zebrafish.</title>
        <authorList>
            <person name="Tsachaki M."/>
            <person name="Meyer A."/>
            <person name="Weger B."/>
            <person name="Kratschmar D.V."/>
            <person name="Tokarz J."/>
            <person name="Adamski J."/>
            <person name="Belting H.G."/>
            <person name="Affolter M."/>
            <person name="Dickmeis T."/>
            <person name="Odermatt A."/>
        </authorList>
    </citation>
    <scope>FUNCTION</scope>
    <scope>CATALYTIC ACTIVITY</scope>
</reference>
<reference key="17">
    <citation type="journal article" date="2019" name="J. Steroid Biochem. Mol. Biol.">
        <title>Enzymatic interconversion of the oxysterols 7beta,25-dihydroxycholesterol and 7-keto,25-hydroxycholesterol by 11beta-hydroxysteroid dehydrogenase type 1 and 2.</title>
        <authorList>
            <person name="Beck K.R."/>
            <person name="Kanagaratnam S."/>
            <person name="Kratschmar D.V."/>
            <person name="Birk J."/>
            <person name="Yamaguchi H."/>
            <person name="Sailer A.W."/>
            <person name="Seuwen K."/>
            <person name="Odermatt A."/>
        </authorList>
    </citation>
    <scope>FUNCTION</scope>
    <scope>CATALYTIC ACTIVITY</scope>
</reference>
<reference key="18">
    <citation type="journal article" date="2021" name="Toxicol. Appl. Pharmacol.">
        <title>Species-specific differences in the inhibition of 11beta-hydroxysteroid dehydrogenase 2 by itraconazole and posaconazole.</title>
        <authorList>
            <person name="Inderbinen S.G."/>
            <person name="Zogg M."/>
            <person name="Kley M."/>
            <person name="Smiesko M."/>
            <person name="Odermatt A."/>
        </authorList>
    </citation>
    <scope>FUNCTION</scope>
    <scope>CATALYTIC ACTIVITY</scope>
</reference>
<reference key="19">
    <citation type="journal article" date="1995" name="J. Clin. Endocrinol. Metab.">
        <title>A mutation in the HSD11B2 gene in a family with apparent mineralocorticoid excess.</title>
        <authorList>
            <person name="Wilson R.C."/>
            <person name="Krozowski Z.S."/>
            <person name="Li K."/>
            <person name="Obeyesekere V.R."/>
            <person name="Razzaghy-Azar M."/>
            <person name="Harbison M.D."/>
            <person name="Wei J.-Q."/>
            <person name="Shackleton C.H.L."/>
            <person name="Funder J.W."/>
            <person name="New M.I."/>
        </authorList>
    </citation>
    <scope>VARIANT AME CYS-337</scope>
</reference>
<reference key="20">
    <citation type="journal article" date="1995" name="Nat. Genet.">
        <title>Human hypertension caused by mutations in the kidney isozyme of 11 beta-hydroxysteroid dehydrogenase.</title>
        <authorList>
            <person name="Mune T."/>
            <person name="Rogerson F.M."/>
            <person name="Nikkilae H."/>
            <person name="Agarwal A.K."/>
            <person name="White P.C."/>
        </authorList>
    </citation>
    <scope>CHARACTERIZATION OF VARIANTS AME CYS-208; CYS-213; 250-LEU-LEU-251 DELINS PRO-SER AND 337-ARG-TYR-338 DELINS HIS</scope>
</reference>
<reference key="21">
    <citation type="journal article" date="1997" name="J. Clin. Endocrinol. Metab.">
        <title>A new compound heterozygous mutation in the 11 beta-hydroxysteroid dehydrogenase type 2 gene in a case of apparent mineralocorticoid excess.</title>
        <authorList>
            <person name="Kitanaka S."/>
            <person name="Katsumata N."/>
            <person name="Tanae A."/>
            <person name="Hibi I."/>
            <person name="Takeyama K."/>
            <person name="Fuse H."/>
            <person name="Kato S."/>
            <person name="Tanaka T."/>
        </authorList>
    </citation>
    <scope>CHARACTERIZATION OF VARIANTS AME HIS-208 AND 337-ARG-TYR-338 DELINS HIS</scope>
</reference>
<reference key="22">
    <citation type="journal article" date="1998" name="Am. J. Hum. Genet.">
        <title>Molecular basis for hypertension in the 'type II variant' of apparent mineralocorticoid excess.</title>
        <authorList>
            <person name="Li A."/>
            <person name="Tedde R."/>
            <person name="Krozowski Z.S."/>
            <person name="Pala A."/>
            <person name="Li K.X.Z."/>
            <person name="Shackleton C.H.L."/>
            <person name="Mantero F."/>
            <person name="Palermo M."/>
            <person name="Stewart P.M."/>
        </authorList>
    </citation>
    <scope>CHARACTERIZATION OF VARIANT AME CYS-279</scope>
</reference>
<reference key="23">
    <citation type="journal article" date="1998" name="J. Clin. Endocrinol. Metab.">
        <title>Examination of genotype and phenotype relationships in 14 patients with apparent mineralocorticoid excess.</title>
        <authorList>
            <person name="Dave-Sharma S."/>
            <person name="Wilson R.C."/>
            <person name="Harbison M.D."/>
            <person name="Newfield R."/>
            <person name="Azar M.R."/>
            <person name="Krozowski Z.S."/>
            <person name="Funder J.W."/>
            <person name="Shackleton C.H.L."/>
            <person name="Bradlow H.L."/>
            <person name="Wei J.-Q."/>
            <person name="Hertecant J."/>
            <person name="Moran A."/>
            <person name="Neiberger R.E."/>
            <person name="Balfe J.W."/>
            <person name="Fattah A."/>
            <person name="Daneman D."/>
            <person name="Akkurt H.I."/>
            <person name="De Santis C."/>
            <person name="New M.I."/>
        </authorList>
    </citation>
    <scope>VARIANTS AME CYS-186; CYS-208; ASN-244; ARG-250; 250-LEU-LEU-251 DELINS PRO-SER; CYS-337 AND 337-ARG-TYR-338 DELINS HIS</scope>
</reference>
<reference key="24">
    <citation type="journal article" date="1998" name="J. Clin. Endocrinol. Metab.">
        <title>The codon 213 of the 11beta-hydroxysteroid dehydrogenase type 2 gene is a hot spot for mutations in apparent mineralocorticoid excess.</title>
        <authorList>
            <person name="Rogoff D."/>
            <person name="Smolenicka Z."/>
            <person name="Bergada I."/>
            <person name="Vallejo G."/>
            <person name="Barontini M."/>
            <person name="Heinrich J.J."/>
            <person name="Ferrari P."/>
        </authorList>
    </citation>
    <scope>CHARACTERIZATION OF VARIANT AME CYS-213</scope>
</reference>
<reference key="25">
    <citation type="journal article" date="1998" name="Proc. Natl. Acad. Sci. U.S.A.">
        <title>A genetic defect resulting in mild low-renin hypertension.</title>
        <authorList>
            <person name="Wilson R.C."/>
            <person name="Dave-Sharma S."/>
            <person name="Wei J.-Q."/>
            <person name="Obeyesekere V.R."/>
            <person name="Li K."/>
            <person name="Ferrari P."/>
            <person name="Krozowski Z.S."/>
            <person name="Shackleton C.H.L."/>
            <person name="Bradlow L."/>
            <person name="Wiens T."/>
            <person name="New M.I."/>
        </authorList>
    </citation>
    <scope>CHARACTERIZATION OF VARIANT HYPERTENSION LEU-227</scope>
</reference>
<reference key="26">
    <citation type="journal article" date="1999" name="Hypertension">
        <title>Genetic, biochemical, and clinical studies of patients with A328V or R213C mutations in 11betaHSD2 causing apparent mineralocorticoid excess.</title>
        <authorList>
            <person name="Morineau G."/>
            <person name="Marc J.-M."/>
            <person name="Boudi A."/>
            <person name="Galons H."/>
            <person name="Gourmelen M."/>
            <person name="Corvol P."/>
            <person name="Pascoe L."/>
            <person name="Fiet J."/>
        </authorList>
    </citation>
    <scope>CHARACTERIZATION OF VARIANTS AME CYS-213 AND VAL-328</scope>
</reference>
<reference key="27">
    <citation type="journal article" date="1999" name="Hypertension">
        <title>Mutants of 11beta-hydroxysteroid dehydrogenase (11-HSD2) with partial activity: improved correlations between genotype and biochemical phenotype in apparent mineralocorticoid excess.</title>
        <authorList>
            <person name="Nunez B.S."/>
            <person name="Rogerson F.M."/>
            <person name="Mune T."/>
            <person name="Igarashi Y."/>
            <person name="Nakagawa Y."/>
            <person name="Phillipov G."/>
            <person name="Moudgil A."/>
            <person name="Travis L.B."/>
            <person name="Palermo M."/>
            <person name="Shackleton C.H.L."/>
            <person name="White P.C."/>
        </authorList>
    </citation>
    <scope>CHARACTERIZATION OF VARIANTS AME ARG-179; PHE-180; HIS-208; VAL-237 AND VAL-328</scope>
</reference>
<reference key="28">
    <citation type="journal article" date="2001" name="J. Clin. Endocrinol. Metab.">
        <title>A mutation in the cofactor-binding domain of 11beta-hydroxysteroid dehydrogenase type 2 associated with mineralocorticoid hypertension.</title>
        <authorList>
            <person name="Odermatt A."/>
            <person name="Dick B."/>
            <person name="Arnold P."/>
            <person name="Zaehner T."/>
            <person name="Plueschke V."/>
            <person name="Deregibus M.N."/>
            <person name="Repetto H."/>
            <person name="Frey B.M."/>
            <person name="Frey F.J."/>
            <person name="Ferrari P."/>
        </authorList>
    </citation>
    <scope>CHARACTERIZATION OF VARIANT AME 114-LEU-GLU-115 DEL</scope>
    <scope>MUTAGENESIS OF GLU-115</scope>
</reference>
<reference key="29">
    <citation type="journal article" date="2003" name="J. Clin. Endocrinol. Metab.">
        <title>Two homozygous mutations in the 11 beta-hydroxysteroid dehydrogenase type 2 gene in a case of apparent mineralocorticoid excess.</title>
        <authorList>
            <person name="Carvajal C.A."/>
            <person name="Gonzalez A.A."/>
            <person name="Romero D.G."/>
            <person name="Gonzalez A."/>
            <person name="Mosso L.M."/>
            <person name="Lagos E.T."/>
            <person name="Hevia Mdel P."/>
            <person name="Rosati M.P."/>
            <person name="Perez-Acle T.O."/>
            <person name="Gomez-Sanchez C.E."/>
            <person name="Montero J.A."/>
            <person name="Fardella C.E."/>
        </authorList>
    </citation>
    <scope>VARIANT AME ASN-223</scope>
    <scope>BIOPHYSICOCHEMICAL PROPERTIES</scope>
    <scope>FUNCTION</scope>
    <scope>CATALYTIC ACTIVITY</scope>
</reference>
<reference key="30">
    <citation type="journal article" date="2007" name="J. Am. Soc. Nephrol.">
        <title>Impaired protein stability of 11beta-hydroxysteroid dehydrogenase type 2: a novel mechanism of apparent mineralocorticoid excess.</title>
        <authorList>
            <person name="Atanasov A.G."/>
            <person name="Ignatova I.D."/>
            <person name="Nashev L.G."/>
            <person name="Dick B."/>
            <person name="Ferrari P."/>
            <person name="Frey F.J."/>
            <person name="Odermatt A."/>
        </authorList>
    </citation>
    <scope>VARIANTS AME CYS-337 AND HIS-338</scope>
    <scope>FUNCTION</scope>
    <scope>CATALYTIC ACTIVITY</scope>
    <scope>SUBCELLULAR LOCATION</scope>
    <scope>BIOPHYSICOCHEMICAL PROPERTIES</scope>
    <scope>MUTAGENESIS OF ARG-335; ARG-336; ARG-337; TYR-338 AND TYR-339</scope>
</reference>
<sequence>MERWPWPSGGAWLLVAARALLQLLRSDLRLGRPLLAALALLAALDWLCQRLLPPPAALAVLAAAGWIALSRLARPQRLPVATRAVLITGCDSGFGKETAKKLDSMGFTVLATVLELNSPGAIELRTCCSPRLRLLQMDLTKPGDISRVLEFTKAHTTSTGLWGLVNNAGHNEVVADAELSPVATFRSCMEVNFFGALELTKGLLPLLRSSRGRIVTVGSPAGDMPYPCLGAYGTSKAAVALLMDTFSCELLPWGVKVSIIQPGCFKTESVRNVGQWEKRKQLLLANLPQELLQAYGKDYIEHLHGQFLHSLRLAMSDLTPVVDAITDALLAARPRRRYYPGQGLGLMYFIHYYLPEGLRRRFLQAFFISHCLPRALQPGQPGTTPPQDAAQDPNLSPGPSPAVAR</sequence>
<evidence type="ECO:0000250" key="1"/>
<evidence type="ECO:0000250" key="2">
    <source>
        <dbReference type="UniProtKB" id="O77667"/>
    </source>
</evidence>
<evidence type="ECO:0000250" key="3">
    <source>
        <dbReference type="UniProtKB" id="P51661"/>
    </source>
</evidence>
<evidence type="ECO:0000255" key="4">
    <source>
        <dbReference type="PROSITE-ProRule" id="PRU10001"/>
    </source>
</evidence>
<evidence type="ECO:0000256" key="5">
    <source>
        <dbReference type="SAM" id="MobiDB-lite"/>
    </source>
</evidence>
<evidence type="ECO:0000269" key="6">
    <source>
    </source>
</evidence>
<evidence type="ECO:0000269" key="7">
    <source>
    </source>
</evidence>
<evidence type="ECO:0000269" key="8">
    <source>
    </source>
</evidence>
<evidence type="ECO:0000269" key="9">
    <source>
    </source>
</evidence>
<evidence type="ECO:0000269" key="10">
    <source>
    </source>
</evidence>
<evidence type="ECO:0000269" key="11">
    <source>
    </source>
</evidence>
<evidence type="ECO:0000269" key="12">
    <source>
    </source>
</evidence>
<evidence type="ECO:0000269" key="13">
    <source>
    </source>
</evidence>
<evidence type="ECO:0000269" key="14">
    <source>
    </source>
</evidence>
<evidence type="ECO:0000269" key="15">
    <source>
    </source>
</evidence>
<evidence type="ECO:0000269" key="16">
    <source>
    </source>
</evidence>
<evidence type="ECO:0000269" key="17">
    <source>
    </source>
</evidence>
<evidence type="ECO:0000269" key="18">
    <source>
    </source>
</evidence>
<evidence type="ECO:0000269" key="19">
    <source>
    </source>
</evidence>
<evidence type="ECO:0000269" key="20">
    <source>
    </source>
</evidence>
<evidence type="ECO:0000269" key="21">
    <source>
    </source>
</evidence>
<evidence type="ECO:0000269" key="22">
    <source>
    </source>
</evidence>
<evidence type="ECO:0000269" key="23">
    <source>
    </source>
</evidence>
<evidence type="ECO:0000269" key="24">
    <source>
    </source>
</evidence>
<evidence type="ECO:0000269" key="25">
    <source>
    </source>
</evidence>
<evidence type="ECO:0000269" key="26">
    <source>
    </source>
</evidence>
<evidence type="ECO:0000269" key="27">
    <source>
    </source>
</evidence>
<evidence type="ECO:0000303" key="28">
    <source>
    </source>
</evidence>
<evidence type="ECO:0000303" key="29">
    <source>
    </source>
</evidence>
<evidence type="ECO:0000303" key="30">
    <source>
    </source>
</evidence>
<evidence type="ECO:0000303" key="31">
    <source>
    </source>
</evidence>
<evidence type="ECO:0000305" key="32"/>
<evidence type="ECO:0000305" key="33">
    <source>
    </source>
</evidence>
<evidence type="ECO:0000305" key="34">
    <source>
    </source>
</evidence>
<evidence type="ECO:0000305" key="35">
    <source>
    </source>
</evidence>
<evidence type="ECO:0000305" key="36">
    <source>
    </source>
</evidence>
<evidence type="ECO:0000312" key="37">
    <source>
        <dbReference type="EMBL" id="AAD14324.1"/>
    </source>
</evidence>
<evidence type="ECO:0000312" key="38">
    <source>
        <dbReference type="HGNC" id="HGNC:5209"/>
    </source>
</evidence>
<proteinExistence type="evidence at protein level"/>